<dbReference type="EC" id="2.5.1.75" evidence="1"/>
<dbReference type="EMBL" id="CP000962">
    <property type="protein sequence ID" value="ACA55998.1"/>
    <property type="molecule type" value="Genomic_DNA"/>
</dbReference>
<dbReference type="RefSeq" id="WP_012343908.1">
    <property type="nucleotide sequence ID" value="NC_010520.1"/>
</dbReference>
<dbReference type="SMR" id="B1KSA1"/>
<dbReference type="KEGG" id="cbl:CLK_1179"/>
<dbReference type="HOGENOM" id="CLU_032616_0_1_9"/>
<dbReference type="GO" id="GO:0005524">
    <property type="term" value="F:ATP binding"/>
    <property type="evidence" value="ECO:0007669"/>
    <property type="project" value="UniProtKB-UniRule"/>
</dbReference>
<dbReference type="GO" id="GO:0052381">
    <property type="term" value="F:tRNA dimethylallyltransferase activity"/>
    <property type="evidence" value="ECO:0007669"/>
    <property type="project" value="UniProtKB-UniRule"/>
</dbReference>
<dbReference type="GO" id="GO:0006400">
    <property type="term" value="P:tRNA modification"/>
    <property type="evidence" value="ECO:0007669"/>
    <property type="project" value="TreeGrafter"/>
</dbReference>
<dbReference type="FunFam" id="1.10.20.140:FF:000001">
    <property type="entry name" value="tRNA dimethylallyltransferase"/>
    <property type="match status" value="1"/>
</dbReference>
<dbReference type="Gene3D" id="1.10.20.140">
    <property type="match status" value="1"/>
</dbReference>
<dbReference type="Gene3D" id="3.40.50.300">
    <property type="entry name" value="P-loop containing nucleotide triphosphate hydrolases"/>
    <property type="match status" value="1"/>
</dbReference>
<dbReference type="HAMAP" id="MF_00185">
    <property type="entry name" value="IPP_trans"/>
    <property type="match status" value="1"/>
</dbReference>
<dbReference type="InterPro" id="IPR039657">
    <property type="entry name" value="Dimethylallyltransferase"/>
</dbReference>
<dbReference type="InterPro" id="IPR018022">
    <property type="entry name" value="IPT"/>
</dbReference>
<dbReference type="InterPro" id="IPR027417">
    <property type="entry name" value="P-loop_NTPase"/>
</dbReference>
<dbReference type="NCBIfam" id="TIGR00174">
    <property type="entry name" value="miaA"/>
    <property type="match status" value="1"/>
</dbReference>
<dbReference type="PANTHER" id="PTHR11088">
    <property type="entry name" value="TRNA DIMETHYLALLYLTRANSFERASE"/>
    <property type="match status" value="1"/>
</dbReference>
<dbReference type="PANTHER" id="PTHR11088:SF60">
    <property type="entry name" value="TRNA DIMETHYLALLYLTRANSFERASE"/>
    <property type="match status" value="1"/>
</dbReference>
<dbReference type="Pfam" id="PF01715">
    <property type="entry name" value="IPPT"/>
    <property type="match status" value="1"/>
</dbReference>
<dbReference type="SUPFAM" id="SSF52540">
    <property type="entry name" value="P-loop containing nucleoside triphosphate hydrolases"/>
    <property type="match status" value="2"/>
</dbReference>
<sequence length="311" mass="36217">MIDLLIIAGPTAVGKTDISIELAEKLNGEIISADSMQIYKYMDIGSAKITKDEMKGIPHHLIDVVKPHEEFNVSSFKVLAEKSIKDIWNRGKLPIIAGGTGLYINSLIYNYDFTDADRDEKYREYLTKLAEDKGKEYVHSLLKDIDEKSYEKLYPNDLKRVVRALEVYKITGKSISEYTKENEKKLYDIPYNVNYFVLNMNREVLYERINKRVDIMMGKGLIEEVKKLESMGYTPDMQSMKGIGYKEVLFYLNGDISLDEAIYLIKKGSRNYAKRQLTWFRKDKRSIWIDKDKYSSEEEIVDEIIKMVKDK</sequence>
<name>MIAA_CLOBM</name>
<evidence type="ECO:0000255" key="1">
    <source>
        <dbReference type="HAMAP-Rule" id="MF_00185"/>
    </source>
</evidence>
<protein>
    <recommendedName>
        <fullName evidence="1">tRNA dimethylallyltransferase</fullName>
        <ecNumber evidence="1">2.5.1.75</ecNumber>
    </recommendedName>
    <alternativeName>
        <fullName evidence="1">Dimethylallyl diphosphate:tRNA dimethylallyltransferase</fullName>
        <shortName evidence="1">DMAPP:tRNA dimethylallyltransferase</shortName>
        <shortName evidence="1">DMATase</shortName>
    </alternativeName>
    <alternativeName>
        <fullName evidence="1">Isopentenyl-diphosphate:tRNA isopentenyltransferase</fullName>
        <shortName evidence="1">IPP transferase</shortName>
        <shortName evidence="1">IPPT</shortName>
        <shortName evidence="1">IPTase</shortName>
    </alternativeName>
</protein>
<organism>
    <name type="scientific">Clostridium botulinum (strain Loch Maree / Type A3)</name>
    <dbReference type="NCBI Taxonomy" id="498214"/>
    <lineage>
        <taxon>Bacteria</taxon>
        <taxon>Bacillati</taxon>
        <taxon>Bacillota</taxon>
        <taxon>Clostridia</taxon>
        <taxon>Eubacteriales</taxon>
        <taxon>Clostridiaceae</taxon>
        <taxon>Clostridium</taxon>
    </lineage>
</organism>
<accession>B1KSA1</accession>
<gene>
    <name evidence="1" type="primary">miaA</name>
    <name type="ordered locus">CLK_1179</name>
</gene>
<comment type="function">
    <text evidence="1">Catalyzes the transfer of a dimethylallyl group onto the adenine at position 37 in tRNAs that read codons beginning with uridine, leading to the formation of N6-(dimethylallyl)adenosine (i(6)A).</text>
</comment>
<comment type="catalytic activity">
    <reaction evidence="1">
        <text>adenosine(37) in tRNA + dimethylallyl diphosphate = N(6)-dimethylallyladenosine(37) in tRNA + diphosphate</text>
        <dbReference type="Rhea" id="RHEA:26482"/>
        <dbReference type="Rhea" id="RHEA-COMP:10162"/>
        <dbReference type="Rhea" id="RHEA-COMP:10375"/>
        <dbReference type="ChEBI" id="CHEBI:33019"/>
        <dbReference type="ChEBI" id="CHEBI:57623"/>
        <dbReference type="ChEBI" id="CHEBI:74411"/>
        <dbReference type="ChEBI" id="CHEBI:74415"/>
        <dbReference type="EC" id="2.5.1.75"/>
    </reaction>
</comment>
<comment type="cofactor">
    <cofactor evidence="1">
        <name>Mg(2+)</name>
        <dbReference type="ChEBI" id="CHEBI:18420"/>
    </cofactor>
</comment>
<comment type="subunit">
    <text evidence="1">Monomer.</text>
</comment>
<comment type="similarity">
    <text evidence="1">Belongs to the IPP transferase family.</text>
</comment>
<proteinExistence type="inferred from homology"/>
<feature type="chain" id="PRO_1000098658" description="tRNA dimethylallyltransferase">
    <location>
        <begin position="1"/>
        <end position="311"/>
    </location>
</feature>
<feature type="region of interest" description="Interaction with substrate tRNA" evidence="1">
    <location>
        <begin position="34"/>
        <end position="37"/>
    </location>
</feature>
<feature type="binding site" evidence="1">
    <location>
        <begin position="9"/>
        <end position="16"/>
    </location>
    <ligand>
        <name>ATP</name>
        <dbReference type="ChEBI" id="CHEBI:30616"/>
    </ligand>
</feature>
<feature type="binding site" evidence="1">
    <location>
        <begin position="11"/>
        <end position="16"/>
    </location>
    <ligand>
        <name>substrate</name>
    </ligand>
</feature>
<feature type="site" description="Interaction with substrate tRNA" evidence="1">
    <location>
        <position position="100"/>
    </location>
</feature>
<feature type="site" description="Interaction with substrate tRNA" evidence="1">
    <location>
        <position position="123"/>
    </location>
</feature>
<reference key="1">
    <citation type="journal article" date="2007" name="PLoS ONE">
        <title>Analysis of the neurotoxin complex genes in Clostridium botulinum A1-A4 and B1 strains: BoNT/A3, /Ba4 and /B1 clusters are located within plasmids.</title>
        <authorList>
            <person name="Smith T.J."/>
            <person name="Hill K.K."/>
            <person name="Foley B.T."/>
            <person name="Detter J.C."/>
            <person name="Munk A.C."/>
            <person name="Bruce D.C."/>
            <person name="Doggett N.A."/>
            <person name="Smith L.A."/>
            <person name="Marks J.D."/>
            <person name="Xie G."/>
            <person name="Brettin T.S."/>
        </authorList>
    </citation>
    <scope>NUCLEOTIDE SEQUENCE [LARGE SCALE GENOMIC DNA]</scope>
    <source>
        <strain>Loch Maree / Type A3</strain>
    </source>
</reference>
<keyword id="KW-0067">ATP-binding</keyword>
<keyword id="KW-0460">Magnesium</keyword>
<keyword id="KW-0547">Nucleotide-binding</keyword>
<keyword id="KW-0808">Transferase</keyword>
<keyword id="KW-0819">tRNA processing</keyword>